<keyword id="KW-0002">3D-structure</keyword>
<keyword id="KW-0963">Cytoplasm</keyword>
<keyword id="KW-0378">Hydrolase</keyword>
<keyword id="KW-0520">NAD</keyword>
<keyword id="KW-0554">One-carbon metabolism</keyword>
<reference key="1">
    <citation type="journal article" date="2010" name="Genome Biol. Evol.">
        <title>Continuing evolution of Burkholderia mallei through genome reduction and large-scale rearrangements.</title>
        <authorList>
            <person name="Losada L."/>
            <person name="Ronning C.M."/>
            <person name="DeShazer D."/>
            <person name="Woods D."/>
            <person name="Fedorova N."/>
            <person name="Kim H.S."/>
            <person name="Shabalina S.A."/>
            <person name="Pearson T.R."/>
            <person name="Brinkac L."/>
            <person name="Tan P."/>
            <person name="Nandi T."/>
            <person name="Crabtree J."/>
            <person name="Badger J."/>
            <person name="Beckstrom-Sternberg S."/>
            <person name="Saqib M."/>
            <person name="Schutzer S.E."/>
            <person name="Keim P."/>
            <person name="Nierman W.C."/>
        </authorList>
    </citation>
    <scope>NUCLEOTIDE SEQUENCE [LARGE SCALE GENOMIC DNA]</scope>
    <source>
        <strain>1710b</strain>
    </source>
</reference>
<reference key="2">
    <citation type="submission" date="2009-02" db="PDB data bank">
        <title>Crystal structure of S-adenosyl-L-homocysteine hydrolase from Burkholderia pseudomallei.</title>
        <authorList>
            <consortium name="Seattle structural genomics center for infectious disease (SSGCID)"/>
        </authorList>
    </citation>
    <scope>X-RAY CRYSTALLOGRAPHY (2.3 ANGSTROMS) IN COMPLEX WITH NAD</scope>
</reference>
<reference key="3">
    <citation type="submission" date="2009-03" db="PDB data bank">
        <title>Crystal structure of S-adenosyl-l-homocysteine hydrolase from Burkholderia pseudomallei in complex with 9-beta-D-arabino-furanosyl-adenine.</title>
        <authorList>
            <consortium name="Joint center for structural genomics (JCSG)"/>
        </authorList>
    </citation>
    <scope>X-RAY CRYSTALLOGRAPHY (2.3 ANGSTROMS) IN COMPLEX WITH NAD AND SUBSTRATE ANALOG</scope>
</reference>
<protein>
    <recommendedName>
        <fullName evidence="1">Adenosylhomocysteinase</fullName>
        <ecNumber evidence="1">3.13.2.1</ecNumber>
    </recommendedName>
    <alternativeName>
        <fullName evidence="1">S-adenosyl-L-homocysteine hydrolase</fullName>
        <shortName evidence="1">AdoHcyase</shortName>
    </alternativeName>
</protein>
<accession>Q3JY79</accession>
<organism>
    <name type="scientific">Burkholderia pseudomallei (strain 1710b)</name>
    <dbReference type="NCBI Taxonomy" id="320372"/>
    <lineage>
        <taxon>Bacteria</taxon>
        <taxon>Pseudomonadati</taxon>
        <taxon>Pseudomonadota</taxon>
        <taxon>Betaproteobacteria</taxon>
        <taxon>Burkholderiales</taxon>
        <taxon>Burkholderiaceae</taxon>
        <taxon>Burkholderia</taxon>
        <taxon>pseudomallei group</taxon>
    </lineage>
</organism>
<comment type="function">
    <text evidence="1">May play a key role in the regulation of the intracellular concentration of adenosylhomocysteine.</text>
</comment>
<comment type="catalytic activity">
    <reaction evidence="1">
        <text>S-adenosyl-L-homocysteine + H2O = L-homocysteine + adenosine</text>
        <dbReference type="Rhea" id="RHEA:21708"/>
        <dbReference type="ChEBI" id="CHEBI:15377"/>
        <dbReference type="ChEBI" id="CHEBI:16335"/>
        <dbReference type="ChEBI" id="CHEBI:57856"/>
        <dbReference type="ChEBI" id="CHEBI:58199"/>
        <dbReference type="EC" id="3.13.2.1"/>
    </reaction>
</comment>
<comment type="cofactor">
    <cofactor>
        <name>NAD(+)</name>
        <dbReference type="ChEBI" id="CHEBI:57540"/>
    </cofactor>
    <text>Binds 1 NAD(+) per subunit.</text>
</comment>
<comment type="pathway">
    <text evidence="1">Amino-acid biosynthesis; L-homocysteine biosynthesis; L-homocysteine from S-adenosyl-L-homocysteine: step 1/1.</text>
</comment>
<comment type="subcellular location">
    <subcellularLocation>
        <location evidence="1">Cytoplasm</location>
    </subcellularLocation>
</comment>
<comment type="similarity">
    <text evidence="1">Belongs to the adenosylhomocysteinase family.</text>
</comment>
<sequence length="473" mass="52201">MNAAVIDSHSAQDYVVADIALAGWGRKELNIAETEMPGLVQIRDEYKAQQPLKGARIAGSLHMTIQTGVLIETLKALGADVRWASCNIFSTQDHAAAAIVEAGTPVFAFKGESLDEYWEFSHRIFEWPNGEFANMILDDGGDATLLLILGSKAEKDRSVIARPTNEEEVALFKSIERHLEIDGSWYSKRLAHIKGVTEETTTGVHRLYQMEKDGRLPFPAFNVNDSVTKSKFDNLYGCRESLVDGIKRATDVMIAGKIAVVAGYGDVGKGCAQSLRGLGATVWVTEIDPICALQAAMEGYRVVTMEYAADKADIFVTATGNYHVINHDHMKAMRHNAIVCNIGHFDSEIDVASTRQYQWENIKPQVDHIIFPDGKRVILLAEGRLVNLGCATGHPSFVMSNSFTNQTLAQIELFTRGGEYANKVYVLPKHLDEKVARLHLARIGAQLSELSDDQAAYIGVSKAGPFKPDHYRY</sequence>
<evidence type="ECO:0000255" key="1">
    <source>
        <dbReference type="HAMAP-Rule" id="MF_00563"/>
    </source>
</evidence>
<evidence type="ECO:0000269" key="2">
    <source ref="2"/>
</evidence>
<evidence type="ECO:0000269" key="3">
    <source ref="3"/>
</evidence>
<evidence type="ECO:0007829" key="4">
    <source>
        <dbReference type="PDB" id="3D64"/>
    </source>
</evidence>
<dbReference type="EC" id="3.13.2.1" evidence="1"/>
<dbReference type="EMBL" id="CP000124">
    <property type="protein sequence ID" value="ABA47924.1"/>
    <property type="molecule type" value="Genomic_DNA"/>
</dbReference>
<dbReference type="RefSeq" id="WP_004198634.1">
    <property type="nucleotide sequence ID" value="NC_007434.1"/>
</dbReference>
<dbReference type="PDB" id="3D64">
    <property type="method" value="X-ray"/>
    <property type="resolution" value="2.30 A"/>
    <property type="chains" value="A/B=1-473"/>
</dbReference>
<dbReference type="PDB" id="3GLQ">
    <property type="method" value="X-ray"/>
    <property type="resolution" value="2.30 A"/>
    <property type="chains" value="A/B=1-473"/>
</dbReference>
<dbReference type="PDBsum" id="3D64"/>
<dbReference type="PDBsum" id="3GLQ"/>
<dbReference type="SMR" id="Q3JY79"/>
<dbReference type="EnsemblBacteria" id="ABA47924">
    <property type="protein sequence ID" value="ABA47924"/>
    <property type="gene ID" value="BURPS1710b_0057"/>
</dbReference>
<dbReference type="GeneID" id="93061911"/>
<dbReference type="KEGG" id="bpm:BURPS1710b_0057"/>
<dbReference type="HOGENOM" id="CLU_025194_2_1_4"/>
<dbReference type="UniPathway" id="UPA00314">
    <property type="reaction ID" value="UER00076"/>
</dbReference>
<dbReference type="EvolutionaryTrace" id="Q3JY79"/>
<dbReference type="Proteomes" id="UP000002700">
    <property type="component" value="Chromosome I"/>
</dbReference>
<dbReference type="GO" id="GO:0005829">
    <property type="term" value="C:cytosol"/>
    <property type="evidence" value="ECO:0007669"/>
    <property type="project" value="TreeGrafter"/>
</dbReference>
<dbReference type="GO" id="GO:0004013">
    <property type="term" value="F:adenosylhomocysteinase activity"/>
    <property type="evidence" value="ECO:0007669"/>
    <property type="project" value="UniProtKB-UniRule"/>
</dbReference>
<dbReference type="GO" id="GO:0071269">
    <property type="term" value="P:L-homocysteine biosynthetic process"/>
    <property type="evidence" value="ECO:0007669"/>
    <property type="project" value="UniProtKB-UniRule"/>
</dbReference>
<dbReference type="GO" id="GO:0006730">
    <property type="term" value="P:one-carbon metabolic process"/>
    <property type="evidence" value="ECO:0007669"/>
    <property type="project" value="UniProtKB-KW"/>
</dbReference>
<dbReference type="GO" id="GO:0033353">
    <property type="term" value="P:S-adenosylmethionine cycle"/>
    <property type="evidence" value="ECO:0007669"/>
    <property type="project" value="TreeGrafter"/>
</dbReference>
<dbReference type="CDD" id="cd00401">
    <property type="entry name" value="SAHH"/>
    <property type="match status" value="1"/>
</dbReference>
<dbReference type="FunFam" id="3.40.50.720:FF:000004">
    <property type="entry name" value="Adenosylhomocysteinase"/>
    <property type="match status" value="1"/>
</dbReference>
<dbReference type="Gene3D" id="3.40.50.1480">
    <property type="entry name" value="Adenosylhomocysteinase-like"/>
    <property type="match status" value="1"/>
</dbReference>
<dbReference type="Gene3D" id="3.40.50.720">
    <property type="entry name" value="NAD(P)-binding Rossmann-like Domain"/>
    <property type="match status" value="1"/>
</dbReference>
<dbReference type="HAMAP" id="MF_00563">
    <property type="entry name" value="AdoHcyase"/>
    <property type="match status" value="1"/>
</dbReference>
<dbReference type="InterPro" id="IPR042172">
    <property type="entry name" value="Adenosylhomocyst_ase-like_sf"/>
</dbReference>
<dbReference type="InterPro" id="IPR000043">
    <property type="entry name" value="Adenosylhomocysteinase-like"/>
</dbReference>
<dbReference type="InterPro" id="IPR015878">
    <property type="entry name" value="Ado_hCys_hydrolase_NAD-bd"/>
</dbReference>
<dbReference type="InterPro" id="IPR036291">
    <property type="entry name" value="NAD(P)-bd_dom_sf"/>
</dbReference>
<dbReference type="InterPro" id="IPR020082">
    <property type="entry name" value="S-Ado-L-homoCys_hydrolase_CS"/>
</dbReference>
<dbReference type="NCBIfam" id="TIGR00936">
    <property type="entry name" value="ahcY"/>
    <property type="match status" value="1"/>
</dbReference>
<dbReference type="NCBIfam" id="NF004005">
    <property type="entry name" value="PRK05476.2-3"/>
    <property type="match status" value="1"/>
</dbReference>
<dbReference type="PANTHER" id="PTHR23420">
    <property type="entry name" value="ADENOSYLHOMOCYSTEINASE"/>
    <property type="match status" value="1"/>
</dbReference>
<dbReference type="PANTHER" id="PTHR23420:SF0">
    <property type="entry name" value="ADENOSYLHOMOCYSTEINASE"/>
    <property type="match status" value="1"/>
</dbReference>
<dbReference type="Pfam" id="PF05221">
    <property type="entry name" value="AdoHcyase"/>
    <property type="match status" value="1"/>
</dbReference>
<dbReference type="Pfam" id="PF00670">
    <property type="entry name" value="AdoHcyase_NAD"/>
    <property type="match status" value="1"/>
</dbReference>
<dbReference type="PIRSF" id="PIRSF001109">
    <property type="entry name" value="Ad_hcy_hydrolase"/>
    <property type="match status" value="1"/>
</dbReference>
<dbReference type="SMART" id="SM00996">
    <property type="entry name" value="AdoHcyase"/>
    <property type="match status" value="1"/>
</dbReference>
<dbReference type="SMART" id="SM00997">
    <property type="entry name" value="AdoHcyase_NAD"/>
    <property type="match status" value="1"/>
</dbReference>
<dbReference type="SUPFAM" id="SSF52283">
    <property type="entry name" value="Formate/glycerate dehydrogenase catalytic domain-like"/>
    <property type="match status" value="1"/>
</dbReference>
<dbReference type="SUPFAM" id="SSF51735">
    <property type="entry name" value="NAD(P)-binding Rossmann-fold domains"/>
    <property type="match status" value="1"/>
</dbReference>
<dbReference type="PROSITE" id="PS00738">
    <property type="entry name" value="ADOHCYASE_1"/>
    <property type="match status" value="1"/>
</dbReference>
<dbReference type="PROSITE" id="PS00739">
    <property type="entry name" value="ADOHCYASE_2"/>
    <property type="match status" value="1"/>
</dbReference>
<feature type="chain" id="PRO_1000024718" description="Adenosylhomocysteinase">
    <location>
        <begin position="1"/>
        <end position="473"/>
    </location>
</feature>
<feature type="binding site">
    <location>
        <position position="64"/>
    </location>
    <ligand>
        <name>substrate</name>
    </ligand>
</feature>
<feature type="binding site">
    <location>
        <position position="139"/>
    </location>
    <ligand>
        <name>substrate</name>
    </ligand>
</feature>
<feature type="binding site">
    <location>
        <position position="199"/>
    </location>
    <ligand>
        <name>substrate</name>
    </ligand>
</feature>
<feature type="binding site" evidence="1">
    <location>
        <begin position="200"/>
        <end position="202"/>
    </location>
    <ligand>
        <name>NAD(+)</name>
        <dbReference type="ChEBI" id="CHEBI:57540"/>
    </ligand>
</feature>
<feature type="binding site">
    <location>
        <position position="229"/>
    </location>
    <ligand>
        <name>substrate</name>
    </ligand>
</feature>
<feature type="binding site">
    <location>
        <position position="233"/>
    </location>
    <ligand>
        <name>substrate</name>
    </ligand>
</feature>
<feature type="binding site" evidence="1">
    <location>
        <position position="234"/>
    </location>
    <ligand>
        <name>NAD(+)</name>
        <dbReference type="ChEBI" id="CHEBI:57540"/>
    </ligand>
</feature>
<feature type="binding site" evidence="1">
    <location>
        <begin position="263"/>
        <end position="268"/>
    </location>
    <ligand>
        <name>NAD(+)</name>
        <dbReference type="ChEBI" id="CHEBI:57540"/>
    </ligand>
</feature>
<feature type="binding site" evidence="1 2 3">
    <location>
        <begin position="266"/>
        <end position="267"/>
    </location>
    <ligand>
        <name>NAD(+)</name>
        <dbReference type="ChEBI" id="CHEBI:57540"/>
    </ligand>
</feature>
<feature type="binding site" evidence="1 2 3">
    <location>
        <position position="286"/>
    </location>
    <ligand>
        <name>NAD(+)</name>
        <dbReference type="ChEBI" id="CHEBI:57540"/>
    </ligand>
</feature>
<feature type="binding site" evidence="1 2 3">
    <location>
        <position position="321"/>
    </location>
    <ligand>
        <name>NAD(+)</name>
        <dbReference type="ChEBI" id="CHEBI:57540"/>
    </ligand>
</feature>
<feature type="binding site" evidence="1">
    <location>
        <begin position="342"/>
        <end position="344"/>
    </location>
    <ligand>
        <name>NAD(+)</name>
        <dbReference type="ChEBI" id="CHEBI:57540"/>
    </ligand>
</feature>
<feature type="binding site" evidence="1 2 3">
    <location>
        <begin position="342"/>
        <end position="343"/>
    </location>
    <ligand>
        <name>NAD(+)</name>
        <dbReference type="ChEBI" id="CHEBI:57540"/>
    </ligand>
</feature>
<feature type="binding site" evidence="1 2 3">
    <location>
        <position position="387"/>
    </location>
    <ligand>
        <name>NAD(+)</name>
        <dbReference type="ChEBI" id="CHEBI:57540"/>
    </ligand>
</feature>
<feature type="helix" evidence="4">
    <location>
        <begin position="19"/>
        <end position="21"/>
    </location>
</feature>
<feature type="helix" evidence="4">
    <location>
        <begin position="22"/>
        <end position="32"/>
    </location>
</feature>
<feature type="helix" evidence="4">
    <location>
        <begin position="33"/>
        <end position="35"/>
    </location>
</feature>
<feature type="helix" evidence="4">
    <location>
        <begin position="37"/>
        <end position="45"/>
    </location>
</feature>
<feature type="turn" evidence="4">
    <location>
        <begin position="46"/>
        <end position="49"/>
    </location>
</feature>
<feature type="turn" evidence="4">
    <location>
        <begin position="51"/>
        <end position="54"/>
    </location>
</feature>
<feature type="strand" evidence="4">
    <location>
        <begin position="56"/>
        <end position="61"/>
    </location>
</feature>
<feature type="helix" evidence="4">
    <location>
        <begin position="65"/>
        <end position="76"/>
    </location>
</feature>
<feature type="strand" evidence="4">
    <location>
        <begin position="80"/>
        <end position="84"/>
    </location>
</feature>
<feature type="strand" evidence="4">
    <location>
        <begin position="86"/>
        <end position="89"/>
    </location>
</feature>
<feature type="helix" evidence="4">
    <location>
        <begin position="93"/>
        <end position="101"/>
    </location>
</feature>
<feature type="helix" evidence="4">
    <location>
        <begin position="114"/>
        <end position="123"/>
    </location>
</feature>
<feature type="strand" evidence="4">
    <location>
        <begin position="135"/>
        <end position="141"/>
    </location>
</feature>
<feature type="helix" evidence="4">
    <location>
        <begin position="142"/>
        <end position="155"/>
    </location>
</feature>
<feature type="helix" evidence="4">
    <location>
        <begin position="157"/>
        <end position="160"/>
    </location>
</feature>
<feature type="helix" evidence="4">
    <location>
        <begin position="166"/>
        <end position="179"/>
    </location>
</feature>
<feature type="turn" evidence="4">
    <location>
        <begin position="183"/>
        <end position="186"/>
    </location>
</feature>
<feature type="helix" evidence="4">
    <location>
        <begin position="187"/>
        <end position="190"/>
    </location>
</feature>
<feature type="strand" evidence="4">
    <location>
        <begin position="196"/>
        <end position="198"/>
    </location>
</feature>
<feature type="helix" evidence="4">
    <location>
        <begin position="201"/>
        <end position="212"/>
    </location>
</feature>
<feature type="strand" evidence="4">
    <location>
        <begin position="220"/>
        <end position="222"/>
    </location>
</feature>
<feature type="helix" evidence="4">
    <location>
        <begin position="227"/>
        <end position="239"/>
    </location>
</feature>
<feature type="helix" evidence="4">
    <location>
        <begin position="242"/>
        <end position="250"/>
    </location>
</feature>
<feature type="strand" evidence="4">
    <location>
        <begin position="258"/>
        <end position="262"/>
    </location>
</feature>
<feature type="helix" evidence="4">
    <location>
        <begin position="266"/>
        <end position="276"/>
    </location>
</feature>
<feature type="turn" evidence="4">
    <location>
        <begin position="277"/>
        <end position="279"/>
    </location>
</feature>
<feature type="strand" evidence="4">
    <location>
        <begin position="281"/>
        <end position="285"/>
    </location>
</feature>
<feature type="helix" evidence="4">
    <location>
        <begin position="289"/>
        <end position="296"/>
    </location>
</feature>
<feature type="turn" evidence="4">
    <location>
        <begin position="297"/>
        <end position="299"/>
    </location>
</feature>
<feature type="helix" evidence="4">
    <location>
        <begin position="305"/>
        <end position="308"/>
    </location>
</feature>
<feature type="turn" evidence="4">
    <location>
        <begin position="309"/>
        <end position="311"/>
    </location>
</feature>
<feature type="strand" evidence="4">
    <location>
        <begin position="313"/>
        <end position="317"/>
    </location>
</feature>
<feature type="strand" evidence="4">
    <location>
        <begin position="319"/>
        <end position="322"/>
    </location>
</feature>
<feature type="helix" evidence="4">
    <location>
        <begin position="327"/>
        <end position="332"/>
    </location>
</feature>
<feature type="strand" evidence="4">
    <location>
        <begin position="337"/>
        <end position="341"/>
    </location>
</feature>
<feature type="strand" evidence="4">
    <location>
        <begin position="343"/>
        <end position="346"/>
    </location>
</feature>
<feature type="helix" evidence="4">
    <location>
        <begin position="352"/>
        <end position="354"/>
    </location>
</feature>
<feature type="strand" evidence="4">
    <location>
        <begin position="357"/>
        <end position="363"/>
    </location>
</feature>
<feature type="strand" evidence="4">
    <location>
        <begin position="366"/>
        <end position="370"/>
    </location>
</feature>
<feature type="strand" evidence="4">
    <location>
        <begin position="376"/>
        <end position="380"/>
    </location>
</feature>
<feature type="helix" evidence="4">
    <location>
        <begin position="381"/>
        <end position="383"/>
    </location>
</feature>
<feature type="helix" evidence="4">
    <location>
        <begin position="386"/>
        <end position="389"/>
    </location>
</feature>
<feature type="helix" evidence="4">
    <location>
        <begin position="396"/>
        <end position="416"/>
    </location>
</feature>
<feature type="helix" evidence="4">
    <location>
        <begin position="417"/>
        <end position="419"/>
    </location>
</feature>
<feature type="strand" evidence="4">
    <location>
        <begin position="422"/>
        <end position="426"/>
    </location>
</feature>
<feature type="helix" evidence="4">
    <location>
        <begin position="429"/>
        <end position="440"/>
    </location>
</feature>
<feature type="turn" evidence="4">
    <location>
        <begin position="441"/>
        <end position="444"/>
    </location>
</feature>
<feature type="helix" evidence="4">
    <location>
        <begin position="452"/>
        <end position="458"/>
    </location>
</feature>
<gene>
    <name evidence="1" type="primary">ahcY</name>
    <name type="ordered locus">BURPS1710b_0057</name>
</gene>
<proteinExistence type="evidence at protein level"/>
<name>SAHH_BURP1</name>